<reference key="1">
    <citation type="journal article" date="1971" name="Biochem. Genet.">
        <title>Primate hemoglobins: some sequences and some proposals concerning the character of evolution and mutation.</title>
        <authorList>
            <person name="Boyer S.H."/>
            <person name="Crosby E.F."/>
            <person name="Noyes A.N."/>
            <person name="Fuller G.F."/>
            <person name="Leslie S.E."/>
            <person name="Donaldson L.J."/>
            <person name="Vrablik G.R."/>
            <person name="Schaefer E.W. Jr."/>
            <person name="Thurmon T.F."/>
        </authorList>
    </citation>
    <scope>PROTEIN SEQUENCE</scope>
</reference>
<accession>P02046</accession>
<feature type="chain" id="PRO_0000053161" description="Hemoglobin subunit delta">
    <location>
        <begin position="1"/>
        <end position="146"/>
    </location>
</feature>
<feature type="domain" description="Globin" evidence="2">
    <location>
        <begin position="2"/>
        <end position="146"/>
    </location>
</feature>
<feature type="binding site" description="distal binding residue">
    <location>
        <position position="63"/>
    </location>
    <ligand>
        <name>heme b</name>
        <dbReference type="ChEBI" id="CHEBI:60344"/>
    </ligand>
    <ligandPart>
        <name>Fe</name>
        <dbReference type="ChEBI" id="CHEBI:18248"/>
    </ligandPart>
</feature>
<feature type="binding site" description="proximal binding residue">
    <location>
        <position position="92"/>
    </location>
    <ligand>
        <name>heme b</name>
        <dbReference type="ChEBI" id="CHEBI:60344"/>
    </ligand>
    <ligandPart>
        <name>Fe</name>
        <dbReference type="ChEBI" id="CHEBI:18248"/>
    </ligandPart>
</feature>
<feature type="modified residue" description="Phosphoserine" evidence="1">
    <location>
        <position position="50"/>
    </location>
</feature>
<feature type="sequence variant" description="In allelic sequence.">
    <original>K</original>
    <variation>N</variation>
    <location>
        <position position="120"/>
    </location>
</feature>
<dbReference type="PIR" id="F02365">
    <property type="entry name" value="HDMKDU"/>
</dbReference>
<dbReference type="SMR" id="P02046"/>
<dbReference type="GO" id="GO:0072562">
    <property type="term" value="C:blood microparticle"/>
    <property type="evidence" value="ECO:0007669"/>
    <property type="project" value="TreeGrafter"/>
</dbReference>
<dbReference type="GO" id="GO:0031838">
    <property type="term" value="C:haptoglobin-hemoglobin complex"/>
    <property type="evidence" value="ECO:0007669"/>
    <property type="project" value="TreeGrafter"/>
</dbReference>
<dbReference type="GO" id="GO:0005833">
    <property type="term" value="C:hemoglobin complex"/>
    <property type="evidence" value="ECO:0007669"/>
    <property type="project" value="InterPro"/>
</dbReference>
<dbReference type="GO" id="GO:0031720">
    <property type="term" value="F:haptoglobin binding"/>
    <property type="evidence" value="ECO:0007669"/>
    <property type="project" value="TreeGrafter"/>
</dbReference>
<dbReference type="GO" id="GO:0020037">
    <property type="term" value="F:heme binding"/>
    <property type="evidence" value="ECO:0007669"/>
    <property type="project" value="InterPro"/>
</dbReference>
<dbReference type="GO" id="GO:0031721">
    <property type="term" value="F:hemoglobin alpha binding"/>
    <property type="evidence" value="ECO:0007669"/>
    <property type="project" value="TreeGrafter"/>
</dbReference>
<dbReference type="GO" id="GO:0046872">
    <property type="term" value="F:metal ion binding"/>
    <property type="evidence" value="ECO:0007669"/>
    <property type="project" value="UniProtKB-KW"/>
</dbReference>
<dbReference type="GO" id="GO:0043177">
    <property type="term" value="F:organic acid binding"/>
    <property type="evidence" value="ECO:0007669"/>
    <property type="project" value="TreeGrafter"/>
</dbReference>
<dbReference type="GO" id="GO:0019825">
    <property type="term" value="F:oxygen binding"/>
    <property type="evidence" value="ECO:0007669"/>
    <property type="project" value="InterPro"/>
</dbReference>
<dbReference type="GO" id="GO:0005344">
    <property type="term" value="F:oxygen carrier activity"/>
    <property type="evidence" value="ECO:0007669"/>
    <property type="project" value="UniProtKB-KW"/>
</dbReference>
<dbReference type="GO" id="GO:0004601">
    <property type="term" value="F:peroxidase activity"/>
    <property type="evidence" value="ECO:0007669"/>
    <property type="project" value="TreeGrafter"/>
</dbReference>
<dbReference type="GO" id="GO:0042744">
    <property type="term" value="P:hydrogen peroxide catabolic process"/>
    <property type="evidence" value="ECO:0007669"/>
    <property type="project" value="TreeGrafter"/>
</dbReference>
<dbReference type="CDD" id="cd08925">
    <property type="entry name" value="Hb-beta-like"/>
    <property type="match status" value="1"/>
</dbReference>
<dbReference type="FunFam" id="1.10.490.10:FF:000001">
    <property type="entry name" value="Hemoglobin subunit beta"/>
    <property type="match status" value="1"/>
</dbReference>
<dbReference type="Gene3D" id="1.10.490.10">
    <property type="entry name" value="Globins"/>
    <property type="match status" value="1"/>
</dbReference>
<dbReference type="InterPro" id="IPR000971">
    <property type="entry name" value="Globin"/>
</dbReference>
<dbReference type="InterPro" id="IPR009050">
    <property type="entry name" value="Globin-like_sf"/>
</dbReference>
<dbReference type="InterPro" id="IPR012292">
    <property type="entry name" value="Globin/Proto"/>
</dbReference>
<dbReference type="InterPro" id="IPR002337">
    <property type="entry name" value="Hemoglobin_b"/>
</dbReference>
<dbReference type="InterPro" id="IPR050056">
    <property type="entry name" value="Hemoglobin_oxygen_transport"/>
</dbReference>
<dbReference type="PANTHER" id="PTHR11442">
    <property type="entry name" value="HEMOGLOBIN FAMILY MEMBER"/>
    <property type="match status" value="1"/>
</dbReference>
<dbReference type="PANTHER" id="PTHR11442:SF42">
    <property type="entry name" value="HEMOGLOBIN SUBUNIT BETA"/>
    <property type="match status" value="1"/>
</dbReference>
<dbReference type="Pfam" id="PF00042">
    <property type="entry name" value="Globin"/>
    <property type="match status" value="1"/>
</dbReference>
<dbReference type="PRINTS" id="PR00814">
    <property type="entry name" value="BETAHAEM"/>
</dbReference>
<dbReference type="SUPFAM" id="SSF46458">
    <property type="entry name" value="Globin-like"/>
    <property type="match status" value="1"/>
</dbReference>
<dbReference type="PROSITE" id="PS01033">
    <property type="entry name" value="GLOBIN"/>
    <property type="match status" value="1"/>
</dbReference>
<name>HBD_AOTTR</name>
<sequence>VHLTGDEKSAVAALWGKVNVEEVGGEALGRLLVVYPWTQRFFESFGALSSPDAVMGNPKVKAHGKKVLGAFSDGLAHLDNLKGTFAQLSELHCDKLHVDPENFRLLGNVLVCVLARNFGKEFTPLLQAAFQKVVAGVATALAHKYH</sequence>
<proteinExistence type="evidence at protein level"/>
<protein>
    <recommendedName>
        <fullName>Hemoglobin subunit delta</fullName>
    </recommendedName>
    <alternativeName>
        <fullName>Delta-globin</fullName>
    </alternativeName>
    <alternativeName>
        <fullName>Hemoglobin delta chain</fullName>
    </alternativeName>
</protein>
<comment type="subunit">
    <text>Heterotetramer of two delta chains and two alpha chains.</text>
</comment>
<comment type="tissue specificity">
    <text>Red blood cells.</text>
</comment>
<comment type="miscellaneous">
    <text>It is possible that either Q-127 or Q-131 be Leu and that L-125 be Q.</text>
</comment>
<comment type="similarity">
    <text evidence="2">Belongs to the globin family.</text>
</comment>
<organism>
    <name type="scientific">Aotus trivirgatus</name>
    <name type="common">Three-striped night monkey</name>
    <name type="synonym">Douroucouli</name>
    <dbReference type="NCBI Taxonomy" id="9505"/>
    <lineage>
        <taxon>Eukaryota</taxon>
        <taxon>Metazoa</taxon>
        <taxon>Chordata</taxon>
        <taxon>Craniata</taxon>
        <taxon>Vertebrata</taxon>
        <taxon>Euteleostomi</taxon>
        <taxon>Mammalia</taxon>
        <taxon>Eutheria</taxon>
        <taxon>Euarchontoglires</taxon>
        <taxon>Primates</taxon>
        <taxon>Haplorrhini</taxon>
        <taxon>Platyrrhini</taxon>
        <taxon>Aotidae</taxon>
        <taxon>Aotus</taxon>
    </lineage>
</organism>
<keyword id="KW-0903">Direct protein sequencing</keyword>
<keyword id="KW-0349">Heme</keyword>
<keyword id="KW-0408">Iron</keyword>
<keyword id="KW-0479">Metal-binding</keyword>
<keyword id="KW-0561">Oxygen transport</keyword>
<keyword id="KW-0597">Phosphoprotein</keyword>
<keyword id="KW-0813">Transport</keyword>
<gene>
    <name type="primary">HBD</name>
</gene>
<evidence type="ECO:0000250" key="1">
    <source>
        <dbReference type="UniProtKB" id="P02042"/>
    </source>
</evidence>
<evidence type="ECO:0000255" key="2">
    <source>
        <dbReference type="PROSITE-ProRule" id="PRU00238"/>
    </source>
</evidence>